<gene>
    <name evidence="1" type="primary">ureC</name>
    <name type="ordered locus">mll4940</name>
</gene>
<organism>
    <name type="scientific">Mesorhizobium japonicum (strain LMG 29417 / CECT 9101 / MAFF 303099)</name>
    <name type="common">Mesorhizobium loti (strain MAFF 303099)</name>
    <dbReference type="NCBI Taxonomy" id="266835"/>
    <lineage>
        <taxon>Bacteria</taxon>
        <taxon>Pseudomonadati</taxon>
        <taxon>Pseudomonadota</taxon>
        <taxon>Alphaproteobacteria</taxon>
        <taxon>Hyphomicrobiales</taxon>
        <taxon>Phyllobacteriaceae</taxon>
        <taxon>Mesorhizobium</taxon>
    </lineage>
</organism>
<accession>Q98CY9</accession>
<sequence>MARISRAAYAQMYGPTVGDKVRLADTELFIEVEKDLTIHGEEVKFGGGKVIRDGMGQSQVSRAQGAVDTVITNALVVDAGAGIFKADIGLKDGRIAAIGKAGNPDTQDGVTIIIGPGTEIIAGEGKILTAGGFDAHIHFICPQQIEEALMSGITTMLGGGTGPAHGTLATTCTPGPWHMARMIQSFDAFPMNIGLSGKGNASLPAALEEMVLGGACSLKLHEDWGTTPAAIDCCLSVADDYDVQVMIHTDTLNESGFVENTVAAIKGRTIHAFHTEGAGGGHAPDIIKVCGLPNVIPSSTNPTRPYTVNTLAEHLDMLMVCHHLSPSIPEDIAFAESRIRKETIAAEDILHDIGAFSIISSDSQAMGRVGEVAIRTWQTADKMKRQRGALPQETGDNDNFRVRRYIAKYTINPAIAHGLSKDIGSIAVGKRADLVLWNPAFFGVKPDMVLVGGMIAAAPMGDPNASIPTPQPMHYRPMFGAYGKARTNSSVTFVSKAALESGLHGRLGVEKQFVAVENTRGGIGKHSMVLNDATPHVEVDPETYEVRADGELLTCEPATVLPMAQRYFLF</sequence>
<reference key="1">
    <citation type="journal article" date="2000" name="DNA Res.">
        <title>Complete genome structure of the nitrogen-fixing symbiotic bacterium Mesorhizobium loti.</title>
        <authorList>
            <person name="Kaneko T."/>
            <person name="Nakamura Y."/>
            <person name="Sato S."/>
            <person name="Asamizu E."/>
            <person name="Kato T."/>
            <person name="Sasamoto S."/>
            <person name="Watanabe A."/>
            <person name="Idesawa K."/>
            <person name="Ishikawa A."/>
            <person name="Kawashima K."/>
            <person name="Kimura T."/>
            <person name="Kishida Y."/>
            <person name="Kiyokawa C."/>
            <person name="Kohara M."/>
            <person name="Matsumoto M."/>
            <person name="Matsuno A."/>
            <person name="Mochizuki Y."/>
            <person name="Nakayama S."/>
            <person name="Nakazaki N."/>
            <person name="Shimpo S."/>
            <person name="Sugimoto M."/>
            <person name="Takeuchi C."/>
            <person name="Yamada M."/>
            <person name="Tabata S."/>
        </authorList>
    </citation>
    <scope>NUCLEOTIDE SEQUENCE [LARGE SCALE GENOMIC DNA]</scope>
    <source>
        <strain>LMG 29417 / CECT 9101 / MAFF 303099</strain>
    </source>
</reference>
<dbReference type="EC" id="3.5.1.5" evidence="1"/>
<dbReference type="EMBL" id="BA000012">
    <property type="protein sequence ID" value="BAB51482.1"/>
    <property type="molecule type" value="Genomic_DNA"/>
</dbReference>
<dbReference type="SMR" id="Q98CY9"/>
<dbReference type="MEROPS" id="M38.982"/>
<dbReference type="KEGG" id="mlo:mll4940"/>
<dbReference type="PATRIC" id="fig|266835.9.peg.3902"/>
<dbReference type="eggNOG" id="COG0804">
    <property type="taxonomic scope" value="Bacteria"/>
</dbReference>
<dbReference type="HOGENOM" id="CLU_000980_0_0_5"/>
<dbReference type="UniPathway" id="UPA00258">
    <property type="reaction ID" value="UER00370"/>
</dbReference>
<dbReference type="Proteomes" id="UP000000552">
    <property type="component" value="Chromosome"/>
</dbReference>
<dbReference type="GO" id="GO:0005737">
    <property type="term" value="C:cytoplasm"/>
    <property type="evidence" value="ECO:0007669"/>
    <property type="project" value="UniProtKB-SubCell"/>
</dbReference>
<dbReference type="GO" id="GO:0016151">
    <property type="term" value="F:nickel cation binding"/>
    <property type="evidence" value="ECO:0007669"/>
    <property type="project" value="UniProtKB-UniRule"/>
</dbReference>
<dbReference type="GO" id="GO:0009039">
    <property type="term" value="F:urease activity"/>
    <property type="evidence" value="ECO:0007669"/>
    <property type="project" value="UniProtKB-UniRule"/>
</dbReference>
<dbReference type="GO" id="GO:0043419">
    <property type="term" value="P:urea catabolic process"/>
    <property type="evidence" value="ECO:0007669"/>
    <property type="project" value="UniProtKB-UniRule"/>
</dbReference>
<dbReference type="CDD" id="cd00375">
    <property type="entry name" value="Urease_alpha"/>
    <property type="match status" value="1"/>
</dbReference>
<dbReference type="Gene3D" id="3.20.20.140">
    <property type="entry name" value="Metal-dependent hydrolases"/>
    <property type="match status" value="1"/>
</dbReference>
<dbReference type="Gene3D" id="2.30.40.10">
    <property type="entry name" value="Urease, subunit C, domain 1"/>
    <property type="match status" value="1"/>
</dbReference>
<dbReference type="HAMAP" id="MF_01953">
    <property type="entry name" value="Urease_alpha"/>
    <property type="match status" value="1"/>
</dbReference>
<dbReference type="InterPro" id="IPR006680">
    <property type="entry name" value="Amidohydro-rel"/>
</dbReference>
<dbReference type="InterPro" id="IPR011059">
    <property type="entry name" value="Metal-dep_hydrolase_composite"/>
</dbReference>
<dbReference type="InterPro" id="IPR032466">
    <property type="entry name" value="Metal_Hydrolase"/>
</dbReference>
<dbReference type="InterPro" id="IPR011612">
    <property type="entry name" value="Urease_alpha_N_dom"/>
</dbReference>
<dbReference type="InterPro" id="IPR050112">
    <property type="entry name" value="Urease_alpha_subunit"/>
</dbReference>
<dbReference type="InterPro" id="IPR017950">
    <property type="entry name" value="Urease_AS"/>
</dbReference>
<dbReference type="InterPro" id="IPR005848">
    <property type="entry name" value="Urease_asu"/>
</dbReference>
<dbReference type="InterPro" id="IPR017951">
    <property type="entry name" value="Urease_asu_c"/>
</dbReference>
<dbReference type="InterPro" id="IPR029754">
    <property type="entry name" value="Urease_Ni-bd"/>
</dbReference>
<dbReference type="NCBIfam" id="NF009685">
    <property type="entry name" value="PRK13206.1"/>
    <property type="match status" value="1"/>
</dbReference>
<dbReference type="NCBIfam" id="NF009686">
    <property type="entry name" value="PRK13207.1"/>
    <property type="match status" value="1"/>
</dbReference>
<dbReference type="NCBIfam" id="TIGR01792">
    <property type="entry name" value="urease_alph"/>
    <property type="match status" value="1"/>
</dbReference>
<dbReference type="PANTHER" id="PTHR43440">
    <property type="entry name" value="UREASE"/>
    <property type="match status" value="1"/>
</dbReference>
<dbReference type="PANTHER" id="PTHR43440:SF1">
    <property type="entry name" value="UREASE"/>
    <property type="match status" value="1"/>
</dbReference>
<dbReference type="Pfam" id="PF01979">
    <property type="entry name" value="Amidohydro_1"/>
    <property type="match status" value="1"/>
</dbReference>
<dbReference type="Pfam" id="PF00449">
    <property type="entry name" value="Urease_alpha"/>
    <property type="match status" value="1"/>
</dbReference>
<dbReference type="PRINTS" id="PR01752">
    <property type="entry name" value="UREASE"/>
</dbReference>
<dbReference type="SUPFAM" id="SSF51338">
    <property type="entry name" value="Composite domain of metallo-dependent hydrolases"/>
    <property type="match status" value="2"/>
</dbReference>
<dbReference type="SUPFAM" id="SSF51556">
    <property type="entry name" value="Metallo-dependent hydrolases"/>
    <property type="match status" value="1"/>
</dbReference>
<dbReference type="PROSITE" id="PS01120">
    <property type="entry name" value="UREASE_1"/>
    <property type="match status" value="1"/>
</dbReference>
<dbReference type="PROSITE" id="PS00145">
    <property type="entry name" value="UREASE_2"/>
    <property type="match status" value="1"/>
</dbReference>
<dbReference type="PROSITE" id="PS51368">
    <property type="entry name" value="UREASE_3"/>
    <property type="match status" value="1"/>
</dbReference>
<feature type="chain" id="PRO_0000234177" description="Urease subunit alpha">
    <location>
        <begin position="1"/>
        <end position="570"/>
    </location>
</feature>
<feature type="domain" description="Urease" evidence="1">
    <location>
        <begin position="131"/>
        <end position="570"/>
    </location>
</feature>
<feature type="active site" description="Proton donor" evidence="1">
    <location>
        <position position="322"/>
    </location>
</feature>
<feature type="binding site" evidence="1">
    <location>
        <position position="136"/>
    </location>
    <ligand>
        <name>Ni(2+)</name>
        <dbReference type="ChEBI" id="CHEBI:49786"/>
        <label>1</label>
    </ligand>
</feature>
<feature type="binding site" evidence="1">
    <location>
        <position position="138"/>
    </location>
    <ligand>
        <name>Ni(2+)</name>
        <dbReference type="ChEBI" id="CHEBI:49786"/>
        <label>1</label>
    </ligand>
</feature>
<feature type="binding site" description="via carbamate group" evidence="1">
    <location>
        <position position="219"/>
    </location>
    <ligand>
        <name>Ni(2+)</name>
        <dbReference type="ChEBI" id="CHEBI:49786"/>
        <label>1</label>
    </ligand>
</feature>
<feature type="binding site" description="via carbamate group" evidence="1">
    <location>
        <position position="219"/>
    </location>
    <ligand>
        <name>Ni(2+)</name>
        <dbReference type="ChEBI" id="CHEBI:49786"/>
        <label>2</label>
    </ligand>
</feature>
<feature type="binding site" evidence="1">
    <location>
        <position position="221"/>
    </location>
    <ligand>
        <name>substrate</name>
    </ligand>
</feature>
<feature type="binding site" evidence="1">
    <location>
        <position position="248"/>
    </location>
    <ligand>
        <name>Ni(2+)</name>
        <dbReference type="ChEBI" id="CHEBI:49786"/>
        <label>2</label>
    </ligand>
</feature>
<feature type="binding site" evidence="1">
    <location>
        <position position="274"/>
    </location>
    <ligand>
        <name>Ni(2+)</name>
        <dbReference type="ChEBI" id="CHEBI:49786"/>
        <label>2</label>
    </ligand>
</feature>
<feature type="binding site" evidence="1">
    <location>
        <position position="362"/>
    </location>
    <ligand>
        <name>Ni(2+)</name>
        <dbReference type="ChEBI" id="CHEBI:49786"/>
        <label>1</label>
    </ligand>
</feature>
<feature type="modified residue" description="N6-carboxylysine" evidence="1">
    <location>
        <position position="219"/>
    </location>
</feature>
<proteinExistence type="inferred from homology"/>
<protein>
    <recommendedName>
        <fullName evidence="1">Urease subunit alpha</fullName>
        <ecNumber evidence="1">3.5.1.5</ecNumber>
    </recommendedName>
    <alternativeName>
        <fullName evidence="1">Urea amidohydrolase subunit alpha</fullName>
    </alternativeName>
</protein>
<evidence type="ECO:0000255" key="1">
    <source>
        <dbReference type="HAMAP-Rule" id="MF_01953"/>
    </source>
</evidence>
<name>URE1_RHILO</name>
<comment type="catalytic activity">
    <reaction evidence="1">
        <text>urea + 2 H2O + H(+) = hydrogencarbonate + 2 NH4(+)</text>
        <dbReference type="Rhea" id="RHEA:20557"/>
        <dbReference type="ChEBI" id="CHEBI:15377"/>
        <dbReference type="ChEBI" id="CHEBI:15378"/>
        <dbReference type="ChEBI" id="CHEBI:16199"/>
        <dbReference type="ChEBI" id="CHEBI:17544"/>
        <dbReference type="ChEBI" id="CHEBI:28938"/>
        <dbReference type="EC" id="3.5.1.5"/>
    </reaction>
</comment>
<comment type="cofactor">
    <cofactor evidence="1">
        <name>Ni cation</name>
        <dbReference type="ChEBI" id="CHEBI:25516"/>
    </cofactor>
    <text evidence="1">Binds 2 nickel ions per subunit.</text>
</comment>
<comment type="pathway">
    <text evidence="1">Nitrogen metabolism; urea degradation; CO(2) and NH(3) from urea (urease route): step 1/1.</text>
</comment>
<comment type="subunit">
    <text evidence="1">Heterotrimer of UreA (gamma), UreB (beta) and UreC (alpha) subunits. Three heterotrimers associate to form the active enzyme.</text>
</comment>
<comment type="subcellular location">
    <subcellularLocation>
        <location evidence="1">Cytoplasm</location>
    </subcellularLocation>
</comment>
<comment type="PTM">
    <text evidence="1">Carboxylation allows a single lysine to coordinate two nickel ions.</text>
</comment>
<comment type="similarity">
    <text evidence="1">Belongs to the metallo-dependent hydrolases superfamily. Urease alpha subunit family.</text>
</comment>
<keyword id="KW-0963">Cytoplasm</keyword>
<keyword id="KW-0378">Hydrolase</keyword>
<keyword id="KW-0479">Metal-binding</keyword>
<keyword id="KW-0533">Nickel</keyword>